<sequence>MTPPPPKRQKRDEYRKATAEATSQSGASDVAEIKLPKKKYYRQRAHANPFSDHHLKYPLSPAHMDWSSHYPAFVDPDPSHINLAGARRLLKDVEVVDIGCGFGGLLIGLAPLLPESLIVGMEIRVSVLEYVTTRIQALRAQQQKLRAATATATAASETPSQQQAQIDGKQANANAAADAASPAPSTDTEHMPTTLVPGSYENISAIRSNTMKFFPNFFARHQLSKIFICFPDPHFKARKHKARIISETLNAEYAYALRPGGLLYTITDVEEYHHWILRHFGVELGAEEESEEKSTSPNANANAGVRELFERVSEEELEKDECVRVMKEATEEGKKVARNKGNKYVAVFRRKTDPEWPA</sequence>
<gene>
    <name type="primary">trm8</name>
    <name type="ORF">AFUB_069250</name>
</gene>
<feature type="chain" id="PRO_0000370585" description="tRNA (guanine-N(7)-)-methyltransferase">
    <location>
        <begin position="1"/>
        <end position="358"/>
    </location>
</feature>
<feature type="region of interest" description="Disordered" evidence="2">
    <location>
        <begin position="1"/>
        <end position="29"/>
    </location>
</feature>
<feature type="region of interest" description="Disordered" evidence="2">
    <location>
        <begin position="151"/>
        <end position="194"/>
    </location>
</feature>
<feature type="compositionally biased region" description="Low complexity" evidence="2">
    <location>
        <begin position="151"/>
        <end position="186"/>
    </location>
</feature>
<feature type="active site" evidence="1">
    <location>
        <position position="232"/>
    </location>
</feature>
<feature type="binding site" evidence="1">
    <location>
        <position position="99"/>
    </location>
    <ligand>
        <name>S-adenosyl-L-methionine</name>
        <dbReference type="ChEBI" id="CHEBI:59789"/>
    </ligand>
</feature>
<feature type="binding site" evidence="1">
    <location>
        <begin position="122"/>
        <end position="123"/>
    </location>
    <ligand>
        <name>S-adenosyl-L-methionine</name>
        <dbReference type="ChEBI" id="CHEBI:59789"/>
    </ligand>
</feature>
<feature type="binding site" evidence="1">
    <location>
        <begin position="209"/>
        <end position="210"/>
    </location>
    <ligand>
        <name>S-adenosyl-L-methionine</name>
        <dbReference type="ChEBI" id="CHEBI:59789"/>
    </ligand>
</feature>
<feature type="binding site" evidence="1">
    <location>
        <position position="229"/>
    </location>
    <ligand>
        <name>S-adenosyl-L-methionine</name>
        <dbReference type="ChEBI" id="CHEBI:59789"/>
    </ligand>
</feature>
<feature type="binding site" evidence="1">
    <location>
        <begin position="330"/>
        <end position="332"/>
    </location>
    <ligand>
        <name>S-adenosyl-L-methionine</name>
        <dbReference type="ChEBI" id="CHEBI:59789"/>
    </ligand>
</feature>
<accession>B0Y4I9</accession>
<keyword id="KW-0489">Methyltransferase</keyword>
<keyword id="KW-0539">Nucleus</keyword>
<keyword id="KW-0694">RNA-binding</keyword>
<keyword id="KW-0949">S-adenosyl-L-methionine</keyword>
<keyword id="KW-0808">Transferase</keyword>
<keyword id="KW-0819">tRNA processing</keyword>
<keyword id="KW-0820">tRNA-binding</keyword>
<evidence type="ECO:0000255" key="1">
    <source>
        <dbReference type="HAMAP-Rule" id="MF_03055"/>
    </source>
</evidence>
<evidence type="ECO:0000256" key="2">
    <source>
        <dbReference type="SAM" id="MobiDB-lite"/>
    </source>
</evidence>
<organism>
    <name type="scientific">Aspergillus fumigatus (strain CBS 144.89 / FGSC A1163 / CEA10)</name>
    <name type="common">Neosartorya fumigata</name>
    <dbReference type="NCBI Taxonomy" id="451804"/>
    <lineage>
        <taxon>Eukaryota</taxon>
        <taxon>Fungi</taxon>
        <taxon>Dikarya</taxon>
        <taxon>Ascomycota</taxon>
        <taxon>Pezizomycotina</taxon>
        <taxon>Eurotiomycetes</taxon>
        <taxon>Eurotiomycetidae</taxon>
        <taxon>Eurotiales</taxon>
        <taxon>Aspergillaceae</taxon>
        <taxon>Aspergillus</taxon>
        <taxon>Aspergillus subgen. Fumigati</taxon>
    </lineage>
</organism>
<proteinExistence type="inferred from homology"/>
<protein>
    <recommendedName>
        <fullName evidence="1">tRNA (guanine-N(7)-)-methyltransferase</fullName>
        <ecNumber evidence="1">2.1.1.33</ecNumber>
    </recommendedName>
    <alternativeName>
        <fullName evidence="1">Transfer RNA methyltransferase 8</fullName>
    </alternativeName>
    <alternativeName>
        <fullName evidence="1">tRNA (guanine(46)-N(7))-methyltransferase</fullName>
    </alternativeName>
    <alternativeName>
        <fullName evidence="1">tRNA(m7G46)-methyltransferase</fullName>
    </alternativeName>
</protein>
<reference key="1">
    <citation type="journal article" date="2008" name="PLoS Genet.">
        <title>Genomic islands in the pathogenic filamentous fungus Aspergillus fumigatus.</title>
        <authorList>
            <person name="Fedorova N.D."/>
            <person name="Khaldi N."/>
            <person name="Joardar V.S."/>
            <person name="Maiti R."/>
            <person name="Amedeo P."/>
            <person name="Anderson M.J."/>
            <person name="Crabtree J."/>
            <person name="Silva J.C."/>
            <person name="Badger J.H."/>
            <person name="Albarraq A."/>
            <person name="Angiuoli S."/>
            <person name="Bussey H."/>
            <person name="Bowyer P."/>
            <person name="Cotty P.J."/>
            <person name="Dyer P.S."/>
            <person name="Egan A."/>
            <person name="Galens K."/>
            <person name="Fraser-Liggett C.M."/>
            <person name="Haas B.J."/>
            <person name="Inman J.M."/>
            <person name="Kent R."/>
            <person name="Lemieux S."/>
            <person name="Malavazi I."/>
            <person name="Orvis J."/>
            <person name="Roemer T."/>
            <person name="Ronning C.M."/>
            <person name="Sundaram J.P."/>
            <person name="Sutton G."/>
            <person name="Turner G."/>
            <person name="Venter J.C."/>
            <person name="White O.R."/>
            <person name="Whitty B.R."/>
            <person name="Youngman P."/>
            <person name="Wolfe K.H."/>
            <person name="Goldman G.H."/>
            <person name="Wortman J.R."/>
            <person name="Jiang B."/>
            <person name="Denning D.W."/>
            <person name="Nierman W.C."/>
        </authorList>
    </citation>
    <scope>NUCLEOTIDE SEQUENCE [LARGE SCALE GENOMIC DNA]</scope>
    <source>
        <strain>CBS 144.89 / FGSC A1163 / CEA10</strain>
    </source>
</reference>
<comment type="function">
    <text evidence="1">Catalyzes the formation of N(7)-methylguanine at position 46 (m7G46) in tRNA.</text>
</comment>
<comment type="catalytic activity">
    <reaction evidence="1">
        <text>guanosine(46) in tRNA + S-adenosyl-L-methionine = N(7)-methylguanosine(46) in tRNA + S-adenosyl-L-homocysteine</text>
        <dbReference type="Rhea" id="RHEA:42708"/>
        <dbReference type="Rhea" id="RHEA-COMP:10188"/>
        <dbReference type="Rhea" id="RHEA-COMP:10189"/>
        <dbReference type="ChEBI" id="CHEBI:57856"/>
        <dbReference type="ChEBI" id="CHEBI:59789"/>
        <dbReference type="ChEBI" id="CHEBI:74269"/>
        <dbReference type="ChEBI" id="CHEBI:74480"/>
        <dbReference type="EC" id="2.1.1.33"/>
    </reaction>
</comment>
<comment type="pathway">
    <text evidence="1">tRNA modification; N(7)-methylguanine-tRNA biosynthesis.</text>
</comment>
<comment type="subunit">
    <text evidence="1">Forms a complex with trm82.</text>
</comment>
<comment type="subcellular location">
    <subcellularLocation>
        <location evidence="1">Nucleus</location>
    </subcellularLocation>
</comment>
<comment type="similarity">
    <text evidence="1">Belongs to the class I-like SAM-binding methyltransferase superfamily. TrmB family.</text>
</comment>
<dbReference type="EC" id="2.1.1.33" evidence="1"/>
<dbReference type="EMBL" id="DS499598">
    <property type="protein sequence ID" value="EDP50588.1"/>
    <property type="molecule type" value="Genomic_DNA"/>
</dbReference>
<dbReference type="SMR" id="B0Y4I9"/>
<dbReference type="EnsemblFungi" id="EDP50588">
    <property type="protein sequence ID" value="EDP50588"/>
    <property type="gene ID" value="AFUB_069250"/>
</dbReference>
<dbReference type="VEuPathDB" id="FungiDB:AFUB_069250"/>
<dbReference type="HOGENOM" id="CLU_050910_3_1_1"/>
<dbReference type="OrthoDB" id="115863at5052"/>
<dbReference type="PhylomeDB" id="B0Y4I9"/>
<dbReference type="UniPathway" id="UPA00989"/>
<dbReference type="Proteomes" id="UP000001699">
    <property type="component" value="Unassembled WGS sequence"/>
</dbReference>
<dbReference type="GO" id="GO:0005634">
    <property type="term" value="C:nucleus"/>
    <property type="evidence" value="ECO:0007669"/>
    <property type="project" value="UniProtKB-SubCell"/>
</dbReference>
<dbReference type="GO" id="GO:0043527">
    <property type="term" value="C:tRNA methyltransferase complex"/>
    <property type="evidence" value="ECO:0007669"/>
    <property type="project" value="TreeGrafter"/>
</dbReference>
<dbReference type="GO" id="GO:0008176">
    <property type="term" value="F:tRNA (guanine(46)-N7)-methyltransferase activity"/>
    <property type="evidence" value="ECO:0007669"/>
    <property type="project" value="UniProtKB-UniRule"/>
</dbReference>
<dbReference type="GO" id="GO:0000049">
    <property type="term" value="F:tRNA binding"/>
    <property type="evidence" value="ECO:0007669"/>
    <property type="project" value="UniProtKB-UniRule"/>
</dbReference>
<dbReference type="Gene3D" id="3.40.50.150">
    <property type="entry name" value="Vaccinia Virus protein VP39"/>
    <property type="match status" value="1"/>
</dbReference>
<dbReference type="HAMAP" id="MF_03055">
    <property type="entry name" value="tRNA_methyltr_TrmB_euk"/>
    <property type="match status" value="1"/>
</dbReference>
<dbReference type="InterPro" id="IPR029063">
    <property type="entry name" value="SAM-dependent_MTases_sf"/>
</dbReference>
<dbReference type="InterPro" id="IPR025763">
    <property type="entry name" value="Trm8_euk"/>
</dbReference>
<dbReference type="InterPro" id="IPR003358">
    <property type="entry name" value="tRNA_(Gua-N-7)_MeTrfase_Trmb"/>
</dbReference>
<dbReference type="PANTHER" id="PTHR23417">
    <property type="entry name" value="3-DEOXY-D-MANNO-OCTULOSONIC-ACID TRANSFERASE/TRNA GUANINE-N 7 - -METHYLTRANSFERASE"/>
    <property type="match status" value="1"/>
</dbReference>
<dbReference type="PANTHER" id="PTHR23417:SF16">
    <property type="entry name" value="TRNA (GUANINE-N(7)-)-METHYLTRANSFERASE"/>
    <property type="match status" value="1"/>
</dbReference>
<dbReference type="Pfam" id="PF02390">
    <property type="entry name" value="Methyltransf_4"/>
    <property type="match status" value="2"/>
</dbReference>
<dbReference type="SUPFAM" id="SSF53335">
    <property type="entry name" value="S-adenosyl-L-methionine-dependent methyltransferases"/>
    <property type="match status" value="1"/>
</dbReference>
<dbReference type="PROSITE" id="PS51625">
    <property type="entry name" value="SAM_MT_TRMB"/>
    <property type="match status" value="1"/>
</dbReference>
<name>TRMB_ASPFC</name>